<comment type="function">
    <text evidence="1">Non-essential, abundant cell division factor that is required for proper Z-ring formation. It is recruited early to the divisome by direct interaction with FtsZ, stimulating Z-ring assembly and thereby promoting cell division earlier in the cell cycle. Its recruitment to the Z-ring requires functional FtsA or ZipA.</text>
</comment>
<comment type="subunit">
    <text evidence="1">Homodimer. The ends of the coiled-coil dimer bind to each other, forming polymers. Interacts with FtsZ.</text>
</comment>
<comment type="subcellular location">
    <subcellularLocation>
        <location evidence="1">Cytoplasm</location>
    </subcellularLocation>
    <text evidence="1">Localizes to the septum at mid-cell, in a FtsZ-like pattern.</text>
</comment>
<comment type="similarity">
    <text evidence="1">Belongs to the ZapB family.</text>
</comment>
<evidence type="ECO:0000255" key="1">
    <source>
        <dbReference type="HAMAP-Rule" id="MF_01196"/>
    </source>
</evidence>
<evidence type="ECO:0000256" key="2">
    <source>
        <dbReference type="SAM" id="MobiDB-lite"/>
    </source>
</evidence>
<accession>B7UNP8</accession>
<feature type="chain" id="PRO_1000164515" description="Cell division protein ZapB">
    <location>
        <begin position="1"/>
        <end position="81"/>
    </location>
</feature>
<feature type="region of interest" description="Disordered" evidence="2">
    <location>
        <begin position="36"/>
        <end position="67"/>
    </location>
</feature>
<feature type="coiled-coil region" evidence="1">
    <location>
        <begin position="5"/>
        <end position="81"/>
    </location>
</feature>
<feature type="compositionally biased region" description="Polar residues" evidence="2">
    <location>
        <begin position="37"/>
        <end position="47"/>
    </location>
</feature>
<feature type="compositionally biased region" description="Basic and acidic residues" evidence="2">
    <location>
        <begin position="48"/>
        <end position="62"/>
    </location>
</feature>
<feature type="modified residue" description="N6-acetyllysine" evidence="1">
    <location>
        <position position="10"/>
    </location>
</feature>
<protein>
    <recommendedName>
        <fullName evidence="1">Cell division protein ZapB</fullName>
    </recommendedName>
</protein>
<reference key="1">
    <citation type="journal article" date="2009" name="J. Bacteriol.">
        <title>Complete genome sequence and comparative genome analysis of enteropathogenic Escherichia coli O127:H6 strain E2348/69.</title>
        <authorList>
            <person name="Iguchi A."/>
            <person name="Thomson N.R."/>
            <person name="Ogura Y."/>
            <person name="Saunders D."/>
            <person name="Ooka T."/>
            <person name="Henderson I.R."/>
            <person name="Harris D."/>
            <person name="Asadulghani M."/>
            <person name="Kurokawa K."/>
            <person name="Dean P."/>
            <person name="Kenny B."/>
            <person name="Quail M.A."/>
            <person name="Thurston S."/>
            <person name="Dougan G."/>
            <person name="Hayashi T."/>
            <person name="Parkhill J."/>
            <person name="Frankel G."/>
        </authorList>
    </citation>
    <scope>NUCLEOTIDE SEQUENCE [LARGE SCALE GENOMIC DNA]</scope>
    <source>
        <strain>E2348/69 / EPEC</strain>
    </source>
</reference>
<gene>
    <name evidence="1" type="primary">zapB</name>
    <name type="ordered locus">E2348C_4232</name>
</gene>
<name>ZAPB_ECO27</name>
<dbReference type="EMBL" id="FM180568">
    <property type="protein sequence ID" value="CAS11780.1"/>
    <property type="molecule type" value="Genomic_DNA"/>
</dbReference>
<dbReference type="RefSeq" id="WP_001296623.1">
    <property type="nucleotide sequence ID" value="NC_011601.1"/>
</dbReference>
<dbReference type="SMR" id="B7UNP8"/>
<dbReference type="GeneID" id="93777970"/>
<dbReference type="KEGG" id="ecg:E2348C_4232"/>
<dbReference type="HOGENOM" id="CLU_171174_2_0_6"/>
<dbReference type="Proteomes" id="UP000008205">
    <property type="component" value="Chromosome"/>
</dbReference>
<dbReference type="GO" id="GO:0005737">
    <property type="term" value="C:cytoplasm"/>
    <property type="evidence" value="ECO:0007669"/>
    <property type="project" value="UniProtKB-SubCell"/>
</dbReference>
<dbReference type="GO" id="GO:0000917">
    <property type="term" value="P:division septum assembly"/>
    <property type="evidence" value="ECO:0007669"/>
    <property type="project" value="UniProtKB-KW"/>
</dbReference>
<dbReference type="GO" id="GO:0043093">
    <property type="term" value="P:FtsZ-dependent cytokinesis"/>
    <property type="evidence" value="ECO:0007669"/>
    <property type="project" value="UniProtKB-UniRule"/>
</dbReference>
<dbReference type="FunFam" id="1.20.5.340:FF:000014">
    <property type="entry name" value="Cell division protein ZapB"/>
    <property type="match status" value="1"/>
</dbReference>
<dbReference type="Gene3D" id="1.20.5.340">
    <property type="match status" value="1"/>
</dbReference>
<dbReference type="HAMAP" id="MF_01196">
    <property type="entry name" value="ZapB"/>
    <property type="match status" value="1"/>
</dbReference>
<dbReference type="InterPro" id="IPR009252">
    <property type="entry name" value="Cell_div_ZapB"/>
</dbReference>
<dbReference type="NCBIfam" id="NF011951">
    <property type="entry name" value="PRK15422.1"/>
    <property type="match status" value="1"/>
</dbReference>
<dbReference type="Pfam" id="PF06005">
    <property type="entry name" value="ZapB"/>
    <property type="match status" value="1"/>
</dbReference>
<organism>
    <name type="scientific">Escherichia coli O127:H6 (strain E2348/69 / EPEC)</name>
    <dbReference type="NCBI Taxonomy" id="574521"/>
    <lineage>
        <taxon>Bacteria</taxon>
        <taxon>Pseudomonadati</taxon>
        <taxon>Pseudomonadota</taxon>
        <taxon>Gammaproteobacteria</taxon>
        <taxon>Enterobacterales</taxon>
        <taxon>Enterobacteriaceae</taxon>
        <taxon>Escherichia</taxon>
    </lineage>
</organism>
<proteinExistence type="inferred from homology"/>
<sequence>MTMSLEVFEKLEAKVQQAIDTITLLQMEIEELKEKNNSLSQEVQNAQHQREELERENNHLKEQQNGWQERLQALLGRMEEV</sequence>
<keyword id="KW-0007">Acetylation</keyword>
<keyword id="KW-0131">Cell cycle</keyword>
<keyword id="KW-0132">Cell division</keyword>
<keyword id="KW-0175">Coiled coil</keyword>
<keyword id="KW-0963">Cytoplasm</keyword>
<keyword id="KW-1185">Reference proteome</keyword>
<keyword id="KW-0717">Septation</keyword>